<gene>
    <name evidence="1" type="primary">rpsG</name>
    <name type="ordered locus">Tfu_2650</name>
</gene>
<sequence length="156" mass="17625">MPRKGPAPKRQLMTDPVYGSPLVTALINKVLRDGKRSLAQSIVYNALEGAREKTGQDPLVILKRAIDNVKPTLEVRSRRVGGATYQVPVEVRASRSTTLALRWLVQYARLRREKTMTERLMNELVDASNGLGAAVKRREDTHKMAESNKAFAHYRW</sequence>
<protein>
    <recommendedName>
        <fullName evidence="1">Small ribosomal subunit protein uS7</fullName>
    </recommendedName>
    <alternativeName>
        <fullName evidence="2">30S ribosomal protein S7</fullName>
    </alternativeName>
</protein>
<accession>Q47LI9</accession>
<comment type="function">
    <text evidence="1">One of the primary rRNA binding proteins, it binds directly to 16S rRNA where it nucleates assembly of the head domain of the 30S subunit. Is located at the subunit interface close to the decoding center, probably blocks exit of the E-site tRNA.</text>
</comment>
<comment type="subunit">
    <text evidence="1">Part of the 30S ribosomal subunit. Contacts proteins S9 and S11.</text>
</comment>
<comment type="similarity">
    <text evidence="1">Belongs to the universal ribosomal protein uS7 family.</text>
</comment>
<proteinExistence type="inferred from homology"/>
<keyword id="KW-0687">Ribonucleoprotein</keyword>
<keyword id="KW-0689">Ribosomal protein</keyword>
<keyword id="KW-0694">RNA-binding</keyword>
<keyword id="KW-0699">rRNA-binding</keyword>
<keyword id="KW-0820">tRNA-binding</keyword>
<feature type="chain" id="PRO_0000226536" description="Small ribosomal subunit protein uS7">
    <location>
        <begin position="1"/>
        <end position="156"/>
    </location>
</feature>
<organism>
    <name type="scientific">Thermobifida fusca (strain YX)</name>
    <dbReference type="NCBI Taxonomy" id="269800"/>
    <lineage>
        <taxon>Bacteria</taxon>
        <taxon>Bacillati</taxon>
        <taxon>Actinomycetota</taxon>
        <taxon>Actinomycetes</taxon>
        <taxon>Streptosporangiales</taxon>
        <taxon>Nocardiopsidaceae</taxon>
        <taxon>Thermobifida</taxon>
    </lineage>
</organism>
<evidence type="ECO:0000255" key="1">
    <source>
        <dbReference type="HAMAP-Rule" id="MF_00480"/>
    </source>
</evidence>
<evidence type="ECO:0000305" key="2"/>
<name>RS7_THEFY</name>
<reference key="1">
    <citation type="journal article" date="2007" name="J. Bacteriol.">
        <title>Genome sequence and analysis of the soil cellulolytic actinomycete Thermobifida fusca YX.</title>
        <authorList>
            <person name="Lykidis A."/>
            <person name="Mavromatis K."/>
            <person name="Ivanova N."/>
            <person name="Anderson I."/>
            <person name="Land M."/>
            <person name="DiBartolo G."/>
            <person name="Martinez M."/>
            <person name="Lapidus A."/>
            <person name="Lucas S."/>
            <person name="Copeland A."/>
            <person name="Richardson P."/>
            <person name="Wilson D.B."/>
            <person name="Kyrpides N."/>
        </authorList>
    </citation>
    <scope>NUCLEOTIDE SEQUENCE [LARGE SCALE GENOMIC DNA]</scope>
    <source>
        <strain>YX</strain>
    </source>
</reference>
<dbReference type="EMBL" id="CP000088">
    <property type="protein sequence ID" value="AAZ56683.1"/>
    <property type="molecule type" value="Genomic_DNA"/>
</dbReference>
<dbReference type="RefSeq" id="WP_011293073.1">
    <property type="nucleotide sequence ID" value="NC_007333.1"/>
</dbReference>
<dbReference type="SMR" id="Q47LI9"/>
<dbReference type="STRING" id="269800.Tfu_2650"/>
<dbReference type="KEGG" id="tfu:Tfu_2650"/>
<dbReference type="eggNOG" id="COG0049">
    <property type="taxonomic scope" value="Bacteria"/>
</dbReference>
<dbReference type="HOGENOM" id="CLU_072226_1_1_11"/>
<dbReference type="OrthoDB" id="9807653at2"/>
<dbReference type="GO" id="GO:0015935">
    <property type="term" value="C:small ribosomal subunit"/>
    <property type="evidence" value="ECO:0007669"/>
    <property type="project" value="InterPro"/>
</dbReference>
<dbReference type="GO" id="GO:0019843">
    <property type="term" value="F:rRNA binding"/>
    <property type="evidence" value="ECO:0007669"/>
    <property type="project" value="UniProtKB-UniRule"/>
</dbReference>
<dbReference type="GO" id="GO:0003735">
    <property type="term" value="F:structural constituent of ribosome"/>
    <property type="evidence" value="ECO:0007669"/>
    <property type="project" value="InterPro"/>
</dbReference>
<dbReference type="GO" id="GO:0000049">
    <property type="term" value="F:tRNA binding"/>
    <property type="evidence" value="ECO:0007669"/>
    <property type="project" value="UniProtKB-UniRule"/>
</dbReference>
<dbReference type="GO" id="GO:0006412">
    <property type="term" value="P:translation"/>
    <property type="evidence" value="ECO:0007669"/>
    <property type="project" value="UniProtKB-UniRule"/>
</dbReference>
<dbReference type="CDD" id="cd14869">
    <property type="entry name" value="uS7_Bacteria"/>
    <property type="match status" value="1"/>
</dbReference>
<dbReference type="FunFam" id="1.10.455.10:FF:000001">
    <property type="entry name" value="30S ribosomal protein S7"/>
    <property type="match status" value="1"/>
</dbReference>
<dbReference type="Gene3D" id="1.10.455.10">
    <property type="entry name" value="Ribosomal protein S7 domain"/>
    <property type="match status" value="1"/>
</dbReference>
<dbReference type="HAMAP" id="MF_00480_B">
    <property type="entry name" value="Ribosomal_uS7_B"/>
    <property type="match status" value="1"/>
</dbReference>
<dbReference type="InterPro" id="IPR000235">
    <property type="entry name" value="Ribosomal_uS7"/>
</dbReference>
<dbReference type="InterPro" id="IPR005717">
    <property type="entry name" value="Ribosomal_uS7_bac/org-type"/>
</dbReference>
<dbReference type="InterPro" id="IPR020606">
    <property type="entry name" value="Ribosomal_uS7_CS"/>
</dbReference>
<dbReference type="InterPro" id="IPR023798">
    <property type="entry name" value="Ribosomal_uS7_dom"/>
</dbReference>
<dbReference type="InterPro" id="IPR036823">
    <property type="entry name" value="Ribosomal_uS7_dom_sf"/>
</dbReference>
<dbReference type="NCBIfam" id="TIGR01029">
    <property type="entry name" value="rpsG_bact"/>
    <property type="match status" value="1"/>
</dbReference>
<dbReference type="PANTHER" id="PTHR11205">
    <property type="entry name" value="RIBOSOMAL PROTEIN S7"/>
    <property type="match status" value="1"/>
</dbReference>
<dbReference type="Pfam" id="PF00177">
    <property type="entry name" value="Ribosomal_S7"/>
    <property type="match status" value="1"/>
</dbReference>
<dbReference type="PIRSF" id="PIRSF002122">
    <property type="entry name" value="RPS7p_RPS7a_RPS5e_RPS7o"/>
    <property type="match status" value="1"/>
</dbReference>
<dbReference type="SUPFAM" id="SSF47973">
    <property type="entry name" value="Ribosomal protein S7"/>
    <property type="match status" value="1"/>
</dbReference>
<dbReference type="PROSITE" id="PS00052">
    <property type="entry name" value="RIBOSOMAL_S7"/>
    <property type="match status" value="1"/>
</dbReference>